<accession>Q0HE75</accession>
<organism>
    <name type="scientific">Shewanella sp. (strain MR-4)</name>
    <dbReference type="NCBI Taxonomy" id="60480"/>
    <lineage>
        <taxon>Bacteria</taxon>
        <taxon>Pseudomonadati</taxon>
        <taxon>Pseudomonadota</taxon>
        <taxon>Gammaproteobacteria</taxon>
        <taxon>Alteromonadales</taxon>
        <taxon>Shewanellaceae</taxon>
        <taxon>Shewanella</taxon>
    </lineage>
</organism>
<gene>
    <name evidence="1" type="primary">rsmH</name>
    <name type="synonym">mraW</name>
    <name type="ordered locus">Shewmr4_3578</name>
</gene>
<protein>
    <recommendedName>
        <fullName evidence="1">Ribosomal RNA small subunit methyltransferase H</fullName>
        <ecNumber evidence="1">2.1.1.199</ecNumber>
    </recommendedName>
    <alternativeName>
        <fullName evidence="1">16S rRNA m(4)C1402 methyltransferase</fullName>
    </alternativeName>
    <alternativeName>
        <fullName evidence="1">rRNA (cytosine-N(4)-)-methyltransferase RsmH</fullName>
    </alternativeName>
</protein>
<feature type="chain" id="PRO_0000387123" description="Ribosomal RNA small subunit methyltransferase H">
    <location>
        <begin position="1"/>
        <end position="313"/>
    </location>
</feature>
<feature type="binding site" evidence="1">
    <location>
        <begin position="35"/>
        <end position="37"/>
    </location>
    <ligand>
        <name>S-adenosyl-L-methionine</name>
        <dbReference type="ChEBI" id="CHEBI:59789"/>
    </ligand>
</feature>
<feature type="binding site" evidence="1">
    <location>
        <position position="55"/>
    </location>
    <ligand>
        <name>S-adenosyl-L-methionine</name>
        <dbReference type="ChEBI" id="CHEBI:59789"/>
    </ligand>
</feature>
<feature type="binding site" evidence="1">
    <location>
        <position position="80"/>
    </location>
    <ligand>
        <name>S-adenosyl-L-methionine</name>
        <dbReference type="ChEBI" id="CHEBI:59789"/>
    </ligand>
</feature>
<feature type="binding site" evidence="1">
    <location>
        <position position="102"/>
    </location>
    <ligand>
        <name>S-adenosyl-L-methionine</name>
        <dbReference type="ChEBI" id="CHEBI:59789"/>
    </ligand>
</feature>
<feature type="binding site" evidence="1">
    <location>
        <position position="109"/>
    </location>
    <ligand>
        <name>S-adenosyl-L-methionine</name>
        <dbReference type="ChEBI" id="CHEBI:59789"/>
    </ligand>
</feature>
<keyword id="KW-0963">Cytoplasm</keyword>
<keyword id="KW-0489">Methyltransferase</keyword>
<keyword id="KW-0698">rRNA processing</keyword>
<keyword id="KW-0949">S-adenosyl-L-methionine</keyword>
<keyword id="KW-0808">Transferase</keyword>
<dbReference type="EC" id="2.1.1.199" evidence="1"/>
<dbReference type="EMBL" id="CP000446">
    <property type="protein sequence ID" value="ABI40642.1"/>
    <property type="molecule type" value="Genomic_DNA"/>
</dbReference>
<dbReference type="RefSeq" id="WP_011624305.1">
    <property type="nucleotide sequence ID" value="NC_008321.1"/>
</dbReference>
<dbReference type="SMR" id="Q0HE75"/>
<dbReference type="GeneID" id="94729682"/>
<dbReference type="KEGG" id="she:Shewmr4_3578"/>
<dbReference type="HOGENOM" id="CLU_038422_2_0_6"/>
<dbReference type="GO" id="GO:0005737">
    <property type="term" value="C:cytoplasm"/>
    <property type="evidence" value="ECO:0007669"/>
    <property type="project" value="UniProtKB-SubCell"/>
</dbReference>
<dbReference type="GO" id="GO:0071424">
    <property type="term" value="F:rRNA (cytosine-N4-)-methyltransferase activity"/>
    <property type="evidence" value="ECO:0007669"/>
    <property type="project" value="UniProtKB-UniRule"/>
</dbReference>
<dbReference type="GO" id="GO:0070475">
    <property type="term" value="P:rRNA base methylation"/>
    <property type="evidence" value="ECO:0007669"/>
    <property type="project" value="UniProtKB-UniRule"/>
</dbReference>
<dbReference type="FunFam" id="1.10.150.170:FF:000001">
    <property type="entry name" value="Ribosomal RNA small subunit methyltransferase H"/>
    <property type="match status" value="1"/>
</dbReference>
<dbReference type="Gene3D" id="1.10.150.170">
    <property type="entry name" value="Putative methyltransferase TM0872, insert domain"/>
    <property type="match status" value="1"/>
</dbReference>
<dbReference type="Gene3D" id="3.40.50.150">
    <property type="entry name" value="Vaccinia Virus protein VP39"/>
    <property type="match status" value="1"/>
</dbReference>
<dbReference type="HAMAP" id="MF_01007">
    <property type="entry name" value="16SrRNA_methyltr_H"/>
    <property type="match status" value="1"/>
</dbReference>
<dbReference type="InterPro" id="IPR002903">
    <property type="entry name" value="RsmH"/>
</dbReference>
<dbReference type="InterPro" id="IPR023397">
    <property type="entry name" value="SAM-dep_MeTrfase_MraW_recog"/>
</dbReference>
<dbReference type="InterPro" id="IPR029063">
    <property type="entry name" value="SAM-dependent_MTases_sf"/>
</dbReference>
<dbReference type="NCBIfam" id="TIGR00006">
    <property type="entry name" value="16S rRNA (cytosine(1402)-N(4))-methyltransferase RsmH"/>
    <property type="match status" value="1"/>
</dbReference>
<dbReference type="PANTHER" id="PTHR11265:SF0">
    <property type="entry name" value="12S RRNA N4-METHYLCYTIDINE METHYLTRANSFERASE"/>
    <property type="match status" value="1"/>
</dbReference>
<dbReference type="PANTHER" id="PTHR11265">
    <property type="entry name" value="S-ADENOSYL-METHYLTRANSFERASE MRAW"/>
    <property type="match status" value="1"/>
</dbReference>
<dbReference type="Pfam" id="PF01795">
    <property type="entry name" value="Methyltransf_5"/>
    <property type="match status" value="1"/>
</dbReference>
<dbReference type="PIRSF" id="PIRSF004486">
    <property type="entry name" value="MraW"/>
    <property type="match status" value="1"/>
</dbReference>
<dbReference type="SUPFAM" id="SSF81799">
    <property type="entry name" value="Putative methyltransferase TM0872, insert domain"/>
    <property type="match status" value="1"/>
</dbReference>
<dbReference type="SUPFAM" id="SSF53335">
    <property type="entry name" value="S-adenosyl-L-methionine-dependent methyltransferases"/>
    <property type="match status" value="1"/>
</dbReference>
<name>RSMH_SHESM</name>
<comment type="function">
    <text evidence="1">Specifically methylates the N4 position of cytidine in position 1402 (C1402) of 16S rRNA.</text>
</comment>
<comment type="catalytic activity">
    <reaction evidence="1">
        <text>cytidine(1402) in 16S rRNA + S-adenosyl-L-methionine = N(4)-methylcytidine(1402) in 16S rRNA + S-adenosyl-L-homocysteine + H(+)</text>
        <dbReference type="Rhea" id="RHEA:42928"/>
        <dbReference type="Rhea" id="RHEA-COMP:10286"/>
        <dbReference type="Rhea" id="RHEA-COMP:10287"/>
        <dbReference type="ChEBI" id="CHEBI:15378"/>
        <dbReference type="ChEBI" id="CHEBI:57856"/>
        <dbReference type="ChEBI" id="CHEBI:59789"/>
        <dbReference type="ChEBI" id="CHEBI:74506"/>
        <dbReference type="ChEBI" id="CHEBI:82748"/>
        <dbReference type="EC" id="2.1.1.199"/>
    </reaction>
</comment>
<comment type="subcellular location">
    <subcellularLocation>
        <location evidence="1">Cytoplasm</location>
    </subcellularLocation>
</comment>
<comment type="similarity">
    <text evidence="1">Belongs to the methyltransferase superfamily. RsmH family.</text>
</comment>
<proteinExistence type="inferred from homology"/>
<reference key="1">
    <citation type="submission" date="2006-08" db="EMBL/GenBank/DDBJ databases">
        <title>Complete sequence of Shewanella sp. MR-4.</title>
        <authorList>
            <consortium name="US DOE Joint Genome Institute"/>
            <person name="Copeland A."/>
            <person name="Lucas S."/>
            <person name="Lapidus A."/>
            <person name="Barry K."/>
            <person name="Detter J.C."/>
            <person name="Glavina del Rio T."/>
            <person name="Hammon N."/>
            <person name="Israni S."/>
            <person name="Dalin E."/>
            <person name="Tice H."/>
            <person name="Pitluck S."/>
            <person name="Kiss H."/>
            <person name="Brettin T."/>
            <person name="Bruce D."/>
            <person name="Han C."/>
            <person name="Tapia R."/>
            <person name="Gilna P."/>
            <person name="Schmutz J."/>
            <person name="Larimer F."/>
            <person name="Land M."/>
            <person name="Hauser L."/>
            <person name="Kyrpides N."/>
            <person name="Mikhailova N."/>
            <person name="Nealson K."/>
            <person name="Konstantinidis K."/>
            <person name="Klappenbach J."/>
            <person name="Tiedje J."/>
            <person name="Richardson P."/>
        </authorList>
    </citation>
    <scope>NUCLEOTIDE SEQUENCE [LARGE SCALE GENOMIC DNA]</scope>
    <source>
        <strain>MR-4</strain>
    </source>
</reference>
<evidence type="ECO:0000255" key="1">
    <source>
        <dbReference type="HAMAP-Rule" id="MF_01007"/>
    </source>
</evidence>
<sequence length="313" mass="35136">MSQEFAHLSVLLEETVGGLNIKDDGIYIDGTFGRGGHSRQVLQRLGENGRLIAIDRDPQAIEAAKQFADDPRFQIVHGGFGQLADYVEELGLVGKIDGVLLDLGVSSPQLDDAERGFSFLRDGPLDMRMDNSQGETAAQWLARAEIEDMAWVFKTYGEEKNARHIARCIAADRDKTPFLRTKDLADLIARITKNKERNKHPATRVFQAIRIYINSELDQIDQALEGALTVLAPQGRLSIISFHSLEDRIVKRFIRRHSQGESVPHGLPITEDQINKSRKLRAIGKAIMPSDEEIERNARARSSVLRIAERLDY</sequence>